<protein>
    <recommendedName>
        <fullName>RNA-binding protein PNO1</fullName>
    </recommendedName>
</protein>
<comment type="function">
    <text evidence="1">Positively regulates dimethylation of two adjacent adenosines in the loop of a conserved hairpin near the 3'-end of 18S rRNA.</text>
</comment>
<comment type="subcellular location">
    <subcellularLocation>
        <location evidence="1">Nucleus</location>
        <location evidence="1">Nucleolus</location>
    </subcellularLocation>
</comment>
<comment type="similarity">
    <text evidence="3">Belongs to the PNO1 family.</text>
</comment>
<organism>
    <name type="scientific">Oryzias latipes</name>
    <name type="common">Japanese rice fish</name>
    <name type="synonym">Japanese killifish</name>
    <dbReference type="NCBI Taxonomy" id="8090"/>
    <lineage>
        <taxon>Eukaryota</taxon>
        <taxon>Metazoa</taxon>
        <taxon>Chordata</taxon>
        <taxon>Craniata</taxon>
        <taxon>Vertebrata</taxon>
        <taxon>Euteleostomi</taxon>
        <taxon>Actinopterygii</taxon>
        <taxon>Neopterygii</taxon>
        <taxon>Teleostei</taxon>
        <taxon>Neoteleostei</taxon>
        <taxon>Acanthomorphata</taxon>
        <taxon>Ovalentaria</taxon>
        <taxon>Atherinomorphae</taxon>
        <taxon>Beloniformes</taxon>
        <taxon>Adrianichthyidae</taxon>
        <taxon>Oryziinae</taxon>
        <taxon>Oryzias</taxon>
    </lineage>
</organism>
<reference key="1">
    <citation type="journal article" date="2004" name="DNA Seq.">
        <title>Cloning and characterization of a novel human RNA binding protein gene PNO1.</title>
        <authorList>
            <person name="Zhou G.-J."/>
            <person name="Zhang Y."/>
            <person name="Wang J."/>
            <person name="Guo J.H."/>
            <person name="Ni J."/>
            <person name="Zhong Z.-M."/>
            <person name="Wang L.-Q."/>
            <person name="Dang Y.-J."/>
            <person name="Dai J.F."/>
            <person name="Yu L."/>
        </authorList>
    </citation>
    <scope>NUCLEOTIDE SEQUENCE [MRNA]</scope>
</reference>
<accession>Q6VBQ6</accession>
<sequence length="243" mass="27125">MDASENGATAPEKHDDGESFTKVKSKKSQKRKLEPDGGITMEVEQPNKRPHFPPISADKLRGPDEMRKVAVPAHRYTPLKENWLKIFTPIVENLQLQVRFNLKTRNVEIKTCKETQDIAALTKAADFIKAFVLGFQVDDAMALIRLDELFLESFDVTDVKPLKGDHLSRAIGRIAGKGGKTKFTIENVTKTRIVLADTKIHILGSFQNIKMARTAICNLILGSPPSKVYGNIRAVASRTAERF</sequence>
<feature type="chain" id="PRO_0000270545" description="RNA-binding protein PNO1">
    <location>
        <begin position="1"/>
        <end position="243"/>
    </location>
</feature>
<feature type="domain" description="KH">
    <location>
        <begin position="164"/>
        <end position="216"/>
    </location>
</feature>
<feature type="region of interest" description="Disordered" evidence="2">
    <location>
        <begin position="1"/>
        <end position="60"/>
    </location>
</feature>
<feature type="compositionally biased region" description="Basic and acidic residues" evidence="2">
    <location>
        <begin position="11"/>
        <end position="21"/>
    </location>
</feature>
<gene>
    <name type="primary">pno1</name>
</gene>
<name>PNO1_ORYLA</name>
<proteinExistence type="evidence at transcript level"/>
<evidence type="ECO:0000250" key="1">
    <source>
        <dbReference type="UniProtKB" id="Q9NRX1"/>
    </source>
</evidence>
<evidence type="ECO:0000256" key="2">
    <source>
        <dbReference type="SAM" id="MobiDB-lite"/>
    </source>
</evidence>
<evidence type="ECO:0000305" key="3"/>
<dbReference type="EMBL" id="AY344059">
    <property type="protein sequence ID" value="AAQ24836.1"/>
    <property type="molecule type" value="mRNA"/>
</dbReference>
<dbReference type="RefSeq" id="NP_001098253.1">
    <property type="nucleotide sequence ID" value="NM_001104783.2"/>
</dbReference>
<dbReference type="SMR" id="Q6VBQ6"/>
<dbReference type="FunCoup" id="Q6VBQ6">
    <property type="interactions" value="1374"/>
</dbReference>
<dbReference type="STRING" id="8090.ENSORLP00000002947"/>
<dbReference type="GeneID" id="100049395"/>
<dbReference type="KEGG" id="ola:100049395"/>
<dbReference type="CTD" id="56902"/>
<dbReference type="eggNOG" id="KOG3273">
    <property type="taxonomic scope" value="Eukaryota"/>
</dbReference>
<dbReference type="InParanoid" id="Q6VBQ6"/>
<dbReference type="OrthoDB" id="1932641at2759"/>
<dbReference type="Proteomes" id="UP000001038">
    <property type="component" value="Unplaced"/>
</dbReference>
<dbReference type="Proteomes" id="UP000265180">
    <property type="component" value="Chromosome 9"/>
</dbReference>
<dbReference type="Proteomes" id="UP000265200">
    <property type="component" value="Chromosome 9"/>
</dbReference>
<dbReference type="GO" id="GO:0005730">
    <property type="term" value="C:nucleolus"/>
    <property type="evidence" value="ECO:0000250"/>
    <property type="project" value="UniProtKB"/>
</dbReference>
<dbReference type="GO" id="GO:0005634">
    <property type="term" value="C:nucleus"/>
    <property type="evidence" value="ECO:0000318"/>
    <property type="project" value="GO_Central"/>
</dbReference>
<dbReference type="GO" id="GO:0003723">
    <property type="term" value="F:RNA binding"/>
    <property type="evidence" value="ECO:0007669"/>
    <property type="project" value="UniProtKB-KW"/>
</dbReference>
<dbReference type="GO" id="GO:0042254">
    <property type="term" value="P:ribosome biogenesis"/>
    <property type="evidence" value="ECO:0007669"/>
    <property type="project" value="UniProtKB-ARBA"/>
</dbReference>
<dbReference type="CDD" id="cd22391">
    <property type="entry name" value="KH-I_PNO1_rpt1"/>
    <property type="match status" value="1"/>
</dbReference>
<dbReference type="CDD" id="cd22392">
    <property type="entry name" value="KH-I_PNO1_rpt2"/>
    <property type="match status" value="1"/>
</dbReference>
<dbReference type="FunFam" id="3.30.1370.10:FF:000009">
    <property type="entry name" value="RNA-binding protein PNO1"/>
    <property type="match status" value="1"/>
</dbReference>
<dbReference type="FunFam" id="3.30.1370.10:FF:000048">
    <property type="entry name" value="RNA-binding protein PNO1 isoform X2"/>
    <property type="match status" value="1"/>
</dbReference>
<dbReference type="Gene3D" id="3.30.1370.10">
    <property type="entry name" value="K Homology domain, type 1"/>
    <property type="match status" value="2"/>
</dbReference>
<dbReference type="InterPro" id="IPR055212">
    <property type="entry name" value="KH-I_PNO1_first"/>
</dbReference>
<dbReference type="InterPro" id="IPR004087">
    <property type="entry name" value="KH_dom"/>
</dbReference>
<dbReference type="InterPro" id="IPR036612">
    <property type="entry name" value="KH_dom_type_1_sf"/>
</dbReference>
<dbReference type="InterPro" id="IPR055211">
    <property type="entry name" value="KH_PNO1_2nd"/>
</dbReference>
<dbReference type="InterPro" id="IPR041174">
    <property type="entry name" value="KRR1-like_KH1"/>
</dbReference>
<dbReference type="PANTHER" id="PTHR12826">
    <property type="entry name" value="RIBONUCLEASE Y"/>
    <property type="match status" value="1"/>
</dbReference>
<dbReference type="PANTHER" id="PTHR12826:SF13">
    <property type="entry name" value="RNA-BINDING PROTEIN PNO1"/>
    <property type="match status" value="1"/>
</dbReference>
<dbReference type="Pfam" id="PF17903">
    <property type="entry name" value="KH_KRR1_1st"/>
    <property type="match status" value="1"/>
</dbReference>
<dbReference type="Pfam" id="PF22891">
    <property type="entry name" value="KH_PNO1_2nd"/>
    <property type="match status" value="1"/>
</dbReference>
<dbReference type="SMART" id="SM00322">
    <property type="entry name" value="KH"/>
    <property type="match status" value="1"/>
</dbReference>
<dbReference type="SUPFAM" id="SSF54791">
    <property type="entry name" value="Eukaryotic type KH-domain (KH-domain type I)"/>
    <property type="match status" value="1"/>
</dbReference>
<keyword id="KW-0539">Nucleus</keyword>
<keyword id="KW-1185">Reference proteome</keyword>
<keyword id="KW-0694">RNA-binding</keyword>